<organism>
    <name type="scientific">Homo sapiens</name>
    <name type="common">Human</name>
    <dbReference type="NCBI Taxonomy" id="9606"/>
    <lineage>
        <taxon>Eukaryota</taxon>
        <taxon>Metazoa</taxon>
        <taxon>Chordata</taxon>
        <taxon>Craniata</taxon>
        <taxon>Vertebrata</taxon>
        <taxon>Euteleostomi</taxon>
        <taxon>Mammalia</taxon>
        <taxon>Eutheria</taxon>
        <taxon>Euarchontoglires</taxon>
        <taxon>Primates</taxon>
        <taxon>Haplorrhini</taxon>
        <taxon>Catarrhini</taxon>
        <taxon>Hominidae</taxon>
        <taxon>Homo</taxon>
    </lineage>
</organism>
<proteinExistence type="evidence at protein level"/>
<reference key="1">
    <citation type="submission" date="1999-03" db="EMBL/GenBank/DDBJ databases">
        <title>NRF3, a basic leucine zipper protein interacting with MAFG.</title>
        <authorList>
            <person name="Blank V."/>
            <person name="Andrews N.C."/>
        </authorList>
    </citation>
    <scope>NUCLEOTIDE SEQUENCE [MRNA]</scope>
    <scope>INTERACTION WITH MAFG</scope>
</reference>
<reference key="2">
    <citation type="submission" date="1999-03" db="EMBL/GenBank/DDBJ databases">
        <authorList>
            <person name="Stoesz S.P."/>
            <person name="Liu S."/>
            <person name="Pickett C.B."/>
        </authorList>
    </citation>
    <scope>NUCLEOTIDE SEQUENCE [GENOMIC DNA / MRNA]</scope>
</reference>
<reference key="3">
    <citation type="journal article" date="2003" name="Nature">
        <title>The DNA sequence of human chromosome 7.</title>
        <authorList>
            <person name="Hillier L.W."/>
            <person name="Fulton R.S."/>
            <person name="Fulton L.A."/>
            <person name="Graves T.A."/>
            <person name="Pepin K.H."/>
            <person name="Wagner-McPherson C."/>
            <person name="Layman D."/>
            <person name="Maas J."/>
            <person name="Jaeger S."/>
            <person name="Walker R."/>
            <person name="Wylie K."/>
            <person name="Sekhon M."/>
            <person name="Becker M.C."/>
            <person name="O'Laughlin M.D."/>
            <person name="Schaller M.E."/>
            <person name="Fewell G.A."/>
            <person name="Delehaunty K.D."/>
            <person name="Miner T.L."/>
            <person name="Nash W.E."/>
            <person name="Cordes M."/>
            <person name="Du H."/>
            <person name="Sun H."/>
            <person name="Edwards J."/>
            <person name="Bradshaw-Cordum H."/>
            <person name="Ali J."/>
            <person name="Andrews S."/>
            <person name="Isak A."/>
            <person name="Vanbrunt A."/>
            <person name="Nguyen C."/>
            <person name="Du F."/>
            <person name="Lamar B."/>
            <person name="Courtney L."/>
            <person name="Kalicki J."/>
            <person name="Ozersky P."/>
            <person name="Bielicki L."/>
            <person name="Scott K."/>
            <person name="Holmes A."/>
            <person name="Harkins R."/>
            <person name="Harris A."/>
            <person name="Strong C.M."/>
            <person name="Hou S."/>
            <person name="Tomlinson C."/>
            <person name="Dauphin-Kohlberg S."/>
            <person name="Kozlowicz-Reilly A."/>
            <person name="Leonard S."/>
            <person name="Rohlfing T."/>
            <person name="Rock S.M."/>
            <person name="Tin-Wollam A.-M."/>
            <person name="Abbott A."/>
            <person name="Minx P."/>
            <person name="Maupin R."/>
            <person name="Strowmatt C."/>
            <person name="Latreille P."/>
            <person name="Miller N."/>
            <person name="Johnson D."/>
            <person name="Murray J."/>
            <person name="Woessner J.P."/>
            <person name="Wendl M.C."/>
            <person name="Yang S.-P."/>
            <person name="Schultz B.R."/>
            <person name="Wallis J.W."/>
            <person name="Spieth J."/>
            <person name="Bieri T.A."/>
            <person name="Nelson J.O."/>
            <person name="Berkowicz N."/>
            <person name="Wohldmann P.E."/>
            <person name="Cook L.L."/>
            <person name="Hickenbotham M.T."/>
            <person name="Eldred J."/>
            <person name="Williams D."/>
            <person name="Bedell J.A."/>
            <person name="Mardis E.R."/>
            <person name="Clifton S.W."/>
            <person name="Chissoe S.L."/>
            <person name="Marra M.A."/>
            <person name="Raymond C."/>
            <person name="Haugen E."/>
            <person name="Gillett W."/>
            <person name="Zhou Y."/>
            <person name="James R."/>
            <person name="Phelps K."/>
            <person name="Iadanoto S."/>
            <person name="Bubb K."/>
            <person name="Simms E."/>
            <person name="Levy R."/>
            <person name="Clendenning J."/>
            <person name="Kaul R."/>
            <person name="Kent W.J."/>
            <person name="Furey T.S."/>
            <person name="Baertsch R.A."/>
            <person name="Brent M.R."/>
            <person name="Keibler E."/>
            <person name="Flicek P."/>
            <person name="Bork P."/>
            <person name="Suyama M."/>
            <person name="Bailey J.A."/>
            <person name="Portnoy M.E."/>
            <person name="Torrents D."/>
            <person name="Chinwalla A.T."/>
            <person name="Gish W.R."/>
            <person name="Eddy S.R."/>
            <person name="McPherson J.D."/>
            <person name="Olson M.V."/>
            <person name="Eichler E.E."/>
            <person name="Green E.D."/>
            <person name="Waterston R.H."/>
            <person name="Wilson R.K."/>
        </authorList>
    </citation>
    <scope>NUCLEOTIDE SEQUENCE [LARGE SCALE GENOMIC DNA]</scope>
</reference>
<reference key="4">
    <citation type="journal article" date="2004" name="Genome Res.">
        <title>The status, quality, and expansion of the NIH full-length cDNA project: the Mammalian Gene Collection (MGC).</title>
        <authorList>
            <consortium name="The MGC Project Team"/>
        </authorList>
    </citation>
    <scope>NUCLEOTIDE SEQUENCE [LARGE SCALE MRNA]</scope>
    <source>
        <tissue>Kidney</tissue>
        <tissue>Lymph</tissue>
        <tissue>Placenta</tissue>
    </source>
</reference>
<reference key="5">
    <citation type="journal article" date="1999" name="J. Biol. Chem.">
        <title>Molecular cloning and functional characterization of a new Cap'n' collar family transcription factor Nrf3.</title>
        <authorList>
            <person name="Kobayashi A."/>
            <person name="Ito E."/>
            <person name="Toki T."/>
            <person name="Kogame K."/>
            <person name="Takahashi S."/>
            <person name="Igarashi K."/>
            <person name="Hayashi N."/>
            <person name="Yamamoto M."/>
        </authorList>
    </citation>
    <scope>NUCLEOTIDE SEQUENCE [MRNA] OF 131-694</scope>
    <scope>CHARACTERIZATION</scope>
    <scope>INTERACTION WITH MAFK</scope>
    <scope>TISSUE SPECIFICITY</scope>
    <source>
        <tissue>Placenta</tissue>
    </source>
</reference>
<name>NF2L3_HUMAN</name>
<feature type="chain" id="PRO_0000076452" description="Nuclear factor erythroid 2-related factor 3">
    <location>
        <begin position="1"/>
        <end position="694"/>
    </location>
</feature>
<feature type="domain" description="bZIP" evidence="1">
    <location>
        <begin position="578"/>
        <end position="641"/>
    </location>
</feature>
<feature type="region of interest" description="Disordered" evidence="2">
    <location>
        <begin position="133"/>
        <end position="256"/>
    </location>
</feature>
<feature type="region of interest" description="Disordered" evidence="2">
    <location>
        <begin position="330"/>
        <end position="357"/>
    </location>
</feature>
<feature type="region of interest" description="Basic motif" evidence="1">
    <location>
        <begin position="580"/>
        <end position="599"/>
    </location>
</feature>
<feature type="region of interest" description="Leucine-zipper" evidence="1">
    <location>
        <begin position="606"/>
        <end position="620"/>
    </location>
</feature>
<feature type="compositionally biased region" description="Low complexity" evidence="2">
    <location>
        <begin position="133"/>
        <end position="150"/>
    </location>
</feature>
<feature type="compositionally biased region" description="Basic and acidic residues" evidence="2">
    <location>
        <begin position="193"/>
        <end position="217"/>
    </location>
</feature>
<feature type="compositionally biased region" description="Basic and acidic residues" evidence="2">
    <location>
        <begin position="231"/>
        <end position="254"/>
    </location>
</feature>
<feature type="compositionally biased region" description="Polar residues" evidence="2">
    <location>
        <begin position="333"/>
        <end position="357"/>
    </location>
</feature>
<feature type="sequence variant" id="VAR_055562" description="In dbSNP:rs2072129.">
    <original>V</original>
    <variation>E</variation>
    <location>
        <position position="441"/>
    </location>
</feature>
<feature type="sequence conflict" description="In Ref. 4; AAH68455." evidence="5" ref="4">
    <original>P</original>
    <variation>L</variation>
    <location>
        <position position="286"/>
    </location>
</feature>
<accession>Q9Y4A8</accession>
<accession>Q6NUS0</accession>
<accession>Q7Z498</accession>
<accession>Q86UJ4</accession>
<accession>Q86VR5</accession>
<accession>Q9UQA4</accession>
<evidence type="ECO:0000255" key="1">
    <source>
        <dbReference type="PROSITE-ProRule" id="PRU00978"/>
    </source>
</evidence>
<evidence type="ECO:0000256" key="2">
    <source>
        <dbReference type="SAM" id="MobiDB-lite"/>
    </source>
</evidence>
<evidence type="ECO:0000269" key="3">
    <source>
    </source>
</evidence>
<evidence type="ECO:0000269" key="4">
    <source ref="1"/>
</evidence>
<evidence type="ECO:0000305" key="5"/>
<protein>
    <recommendedName>
        <fullName>Nuclear factor erythroid 2-related factor 3</fullName>
        <shortName>NF-E2-related factor 3</shortName>
        <shortName>NFE2-related factor 3</shortName>
    </recommendedName>
    <alternativeName>
        <fullName>Nuclear factor, erythroid derived 2, like 3</fullName>
    </alternativeName>
</protein>
<comment type="function">
    <text>Activates erythroid-specific, globin gene expression.</text>
</comment>
<comment type="subunit">
    <text evidence="3 4">Heterodimer with MAFG, MAFK and other small MAF proteins that binds to the MAF recognition elements (MARE).</text>
</comment>
<comment type="interaction">
    <interactant intactId="EBI-10890629">
        <id>Q9Y4A8</id>
    </interactant>
    <interactant intactId="EBI-721128">
        <id>Q9ULX9</id>
        <label>MAFF</label>
    </interactant>
    <organismsDiffer>false</organismsDiffer>
    <experiments>5</experiments>
</comment>
<comment type="interaction">
    <interactant intactId="EBI-10890629">
        <id>Q9Y4A8</id>
    </interactant>
    <interactant intactId="EBI-713514">
        <id>O15525</id>
        <label>MAFG</label>
    </interactant>
    <organismsDiffer>false</organismsDiffer>
    <experiments>6</experiments>
</comment>
<comment type="interaction">
    <interactant intactId="EBI-10890629">
        <id>Q9Y4A8</id>
    </interactant>
    <interactant intactId="EBI-726369">
        <id>Q16621</id>
        <label>NFE2</label>
    </interactant>
    <organismsDiffer>false</organismsDiffer>
    <experiments>4</experiments>
</comment>
<comment type="subcellular location">
    <subcellularLocation>
        <location evidence="1">Nucleus</location>
    </subcellularLocation>
</comment>
<comment type="tissue specificity">
    <text evidence="3">Highly expressed in human placenta and also in B-cell and monocyte cell lines. Low expression in heart, brain, lung, skeletal muscle, kidney and pancreas.</text>
</comment>
<comment type="similarity">
    <text evidence="5">Belongs to the bZIP family. CNC subfamily.</text>
</comment>
<comment type="sequence caution" evidence="5">
    <conflict type="erroneous gene model prediction">
        <sequence resource="EMBL-CDS" id="AAP22344"/>
    </conflict>
</comment>
<comment type="sequence caution" evidence="5">
    <conflict type="erroneous initiation">
        <sequence resource="EMBL-CDS" id="BAA76288"/>
    </conflict>
</comment>
<gene>
    <name type="primary">NFE2L3</name>
    <name type="synonym">NRF3</name>
</gene>
<sequence>MKHLKRWWSAGGGLLHLTLLLSLAGLRVDLDLYLLLPPPTLLQDELLFLGGPASSAYALSPFSASGGWGRAGHLHPKGRELDPAAPPEGQLLREVRALGVPFVPRTSVDAWLVHSVAAGSADEAHGLLGAAAASSTGGAGASVDGGSQAVQGGGGDPRAARSGPLDAGEEEKAPAEPTAQVPDAGGCASEENGVLREKHEAVDHSSQHEENEERVSAQKENSLQQNDDDENKIAEKPDWEAEKTTESRNERHLNGTDTSFSLEDLFQLLSSQPENSLEGISLGDIPLPGSISDGMNSSAHYHVNFSQAISQDVNLHEAILLCPNNTFRRDPTARTSQSQEPFLQLNSHTTNPEQTLPGTNLTGFLSPVDNHMRNLTSQDLLYDLDINIFDEINLMSLATEDNFDPIDVSQLFDEPDSDSGLSLDSSHNNTSVIKSNSSHSVCDEGAIGYCTDHESSSHHDLEGAVGGYYPEPSKLCHLDQSDSDFHGDLTFQHVFHNHTYHLQPTAPESTSEPFPWPGKSQKIRSRYLEDTDRNLSRDEQRAKALHIPFSVDEIVGMPVDSFNSMLSRYYLTDLQVSLIRDIRRRGKNKVAAQNCRKRKLDIILNLEDDVCNLQAKKETLKREQAQCNKAINIMKQKLHDLYHDIFSRLRDDQGRPVNPNHYALQCTHDGSILIVPKELVASGHKKETQKGKRK</sequence>
<dbReference type="EMBL" id="AF133059">
    <property type="protein sequence ID" value="AAG43275.1"/>
    <property type="molecule type" value="mRNA"/>
</dbReference>
<dbReference type="EMBL" id="AF134891">
    <property type="protein sequence ID" value="AAF61404.1"/>
    <property type="molecule type" value="mRNA"/>
</dbReference>
<dbReference type="EMBL" id="AF135116">
    <property type="protein sequence ID" value="AAF61415.1"/>
    <property type="molecule type" value="Genomic_DNA"/>
</dbReference>
<dbReference type="EMBL" id="AC004520">
    <property type="protein sequence ID" value="AAP22344.1"/>
    <property type="status" value="ALT_SEQ"/>
    <property type="molecule type" value="Genomic_DNA"/>
</dbReference>
<dbReference type="EMBL" id="BC049219">
    <property type="protein sequence ID" value="AAH49219.1"/>
    <property type="molecule type" value="mRNA"/>
</dbReference>
<dbReference type="EMBL" id="BC056142">
    <property type="protein sequence ID" value="AAH56142.1"/>
    <property type="molecule type" value="mRNA"/>
</dbReference>
<dbReference type="EMBL" id="BC068455">
    <property type="protein sequence ID" value="AAH68455.1"/>
    <property type="molecule type" value="mRNA"/>
</dbReference>
<dbReference type="EMBL" id="AB010812">
    <property type="protein sequence ID" value="BAA76288.1"/>
    <property type="status" value="ALT_INIT"/>
    <property type="molecule type" value="mRNA"/>
</dbReference>
<dbReference type="CCDS" id="CCDS5396.1"/>
<dbReference type="RefSeq" id="NP_004280.5">
    <property type="nucleotide sequence ID" value="NM_004289.6"/>
</dbReference>
<dbReference type="SMR" id="Q9Y4A8"/>
<dbReference type="BioGRID" id="114967">
    <property type="interactions" value="20"/>
</dbReference>
<dbReference type="ComplexPortal" id="CPX-2471">
    <property type="entry name" value="bZIP transcription factor complex, BACH2-NFE2L3"/>
</dbReference>
<dbReference type="ComplexPortal" id="CPX-6572">
    <property type="entry name" value="bZIP transcription factor complex, ATF4-NFE2L3"/>
</dbReference>
<dbReference type="FunCoup" id="Q9Y4A8">
    <property type="interactions" value="738"/>
</dbReference>
<dbReference type="IntAct" id="Q9Y4A8">
    <property type="interactions" value="14"/>
</dbReference>
<dbReference type="STRING" id="9606.ENSP00000056233"/>
<dbReference type="GlyGen" id="Q9Y4A8">
    <property type="glycosylation" value="1 site, 1 N-linked glycan (1 site)"/>
</dbReference>
<dbReference type="iPTMnet" id="Q9Y4A8"/>
<dbReference type="PhosphoSitePlus" id="Q9Y4A8"/>
<dbReference type="BioMuta" id="NFE2L3"/>
<dbReference type="DMDM" id="56404677"/>
<dbReference type="jPOST" id="Q9Y4A8"/>
<dbReference type="MassIVE" id="Q9Y4A8"/>
<dbReference type="PaxDb" id="9606-ENSP00000056233"/>
<dbReference type="PeptideAtlas" id="Q9Y4A8"/>
<dbReference type="ProteomicsDB" id="86144"/>
<dbReference type="Antibodypedia" id="12307">
    <property type="antibodies" value="174 antibodies from 28 providers"/>
</dbReference>
<dbReference type="DNASU" id="9603"/>
<dbReference type="Ensembl" id="ENST00000056233.4">
    <property type="protein sequence ID" value="ENSP00000056233.3"/>
    <property type="gene ID" value="ENSG00000050344.9"/>
</dbReference>
<dbReference type="GeneID" id="9603"/>
<dbReference type="KEGG" id="hsa:9603"/>
<dbReference type="MANE-Select" id="ENST00000056233.4">
    <property type="protein sequence ID" value="ENSP00000056233.3"/>
    <property type="RefSeq nucleotide sequence ID" value="NM_004289.7"/>
    <property type="RefSeq protein sequence ID" value="NP_004280.5"/>
</dbReference>
<dbReference type="UCSC" id="uc003sxq.4">
    <property type="organism name" value="human"/>
</dbReference>
<dbReference type="AGR" id="HGNC:7783"/>
<dbReference type="CTD" id="9603"/>
<dbReference type="DisGeNET" id="9603"/>
<dbReference type="GeneCards" id="NFE2L3"/>
<dbReference type="HGNC" id="HGNC:7783">
    <property type="gene designation" value="NFE2L3"/>
</dbReference>
<dbReference type="HPA" id="ENSG00000050344">
    <property type="expression patterns" value="Tissue enhanced (placenta)"/>
</dbReference>
<dbReference type="MIM" id="604135">
    <property type="type" value="gene"/>
</dbReference>
<dbReference type="neXtProt" id="NX_Q9Y4A8"/>
<dbReference type="OpenTargets" id="ENSG00000050344"/>
<dbReference type="PharmGKB" id="PA31589"/>
<dbReference type="VEuPathDB" id="HostDB:ENSG00000050344"/>
<dbReference type="eggNOG" id="KOG3863">
    <property type="taxonomic scope" value="Eukaryota"/>
</dbReference>
<dbReference type="GeneTree" id="ENSGT00950000182892"/>
<dbReference type="HOGENOM" id="CLU_024173_1_0_1"/>
<dbReference type="InParanoid" id="Q9Y4A8"/>
<dbReference type="OMA" id="CNLQARK"/>
<dbReference type="OrthoDB" id="7458135at2759"/>
<dbReference type="PAN-GO" id="Q9Y4A8">
    <property type="GO annotations" value="4 GO annotations based on evolutionary models"/>
</dbReference>
<dbReference type="PhylomeDB" id="Q9Y4A8"/>
<dbReference type="TreeFam" id="TF337360"/>
<dbReference type="PathwayCommons" id="Q9Y4A8"/>
<dbReference type="SignaLink" id="Q9Y4A8"/>
<dbReference type="SIGNOR" id="Q9Y4A8"/>
<dbReference type="BioGRID-ORCS" id="9603">
    <property type="hits" value="99 hits in 1180 CRISPR screens"/>
</dbReference>
<dbReference type="ChiTaRS" id="NFE2L3">
    <property type="organism name" value="human"/>
</dbReference>
<dbReference type="GeneWiki" id="NFE2L3"/>
<dbReference type="GenomeRNAi" id="9603"/>
<dbReference type="Pharos" id="Q9Y4A8">
    <property type="development level" value="Tbio"/>
</dbReference>
<dbReference type="PRO" id="PR:Q9Y4A8"/>
<dbReference type="Proteomes" id="UP000005640">
    <property type="component" value="Chromosome 7"/>
</dbReference>
<dbReference type="RNAct" id="Q9Y4A8">
    <property type="molecule type" value="protein"/>
</dbReference>
<dbReference type="Bgee" id="ENSG00000050344">
    <property type="expression patterns" value="Expressed in primordial germ cell in gonad and 133 other cell types or tissues"/>
</dbReference>
<dbReference type="ExpressionAtlas" id="Q9Y4A8">
    <property type="expression patterns" value="baseline and differential"/>
</dbReference>
<dbReference type="GO" id="GO:0000785">
    <property type="term" value="C:chromatin"/>
    <property type="evidence" value="ECO:0000247"/>
    <property type="project" value="NTNU_SB"/>
</dbReference>
<dbReference type="GO" id="GO:0005634">
    <property type="term" value="C:nucleus"/>
    <property type="evidence" value="ECO:0000318"/>
    <property type="project" value="GO_Central"/>
</dbReference>
<dbReference type="GO" id="GO:0090575">
    <property type="term" value="C:RNA polymerase II transcription regulator complex"/>
    <property type="evidence" value="ECO:0000353"/>
    <property type="project" value="ComplexPortal"/>
</dbReference>
<dbReference type="GO" id="GO:0003700">
    <property type="term" value="F:DNA-binding transcription factor activity"/>
    <property type="evidence" value="ECO:0000304"/>
    <property type="project" value="ProtInc"/>
</dbReference>
<dbReference type="GO" id="GO:0000981">
    <property type="term" value="F:DNA-binding transcription factor activity, RNA polymerase II-specific"/>
    <property type="evidence" value="ECO:0000247"/>
    <property type="project" value="NTNU_SB"/>
</dbReference>
<dbReference type="GO" id="GO:0001227">
    <property type="term" value="F:DNA-binding transcription repressor activity, RNA polymerase II-specific"/>
    <property type="evidence" value="ECO:0007669"/>
    <property type="project" value="Ensembl"/>
</dbReference>
<dbReference type="GO" id="GO:0000978">
    <property type="term" value="F:RNA polymerase II cis-regulatory region sequence-specific DNA binding"/>
    <property type="evidence" value="ECO:0000318"/>
    <property type="project" value="GO_Central"/>
</dbReference>
<dbReference type="GO" id="GO:0140467">
    <property type="term" value="P:integrated stress response signaling"/>
    <property type="evidence" value="ECO:0000303"/>
    <property type="project" value="ComplexPortal"/>
</dbReference>
<dbReference type="GO" id="GO:0006357">
    <property type="term" value="P:regulation of transcription by RNA polymerase II"/>
    <property type="evidence" value="ECO:0000318"/>
    <property type="project" value="GO_Central"/>
</dbReference>
<dbReference type="GO" id="GO:0006366">
    <property type="term" value="P:transcription by RNA polymerase II"/>
    <property type="evidence" value="ECO:0000304"/>
    <property type="project" value="ProtInc"/>
</dbReference>
<dbReference type="CDD" id="cd14720">
    <property type="entry name" value="bZIP_NFE2-like"/>
    <property type="match status" value="1"/>
</dbReference>
<dbReference type="FunFam" id="1.10.880.10:FF:000003">
    <property type="entry name" value="Nuclear factor, erythroid 2 like 3"/>
    <property type="match status" value="1"/>
</dbReference>
<dbReference type="Gene3D" id="1.10.880.10">
    <property type="entry name" value="Transcription factor, Skn-1-like, DNA-binding domain"/>
    <property type="match status" value="1"/>
</dbReference>
<dbReference type="InterPro" id="IPR004827">
    <property type="entry name" value="bZIP"/>
</dbReference>
<dbReference type="InterPro" id="IPR004826">
    <property type="entry name" value="bZIP_Maf"/>
</dbReference>
<dbReference type="InterPro" id="IPR046347">
    <property type="entry name" value="bZIP_sf"/>
</dbReference>
<dbReference type="InterPro" id="IPR047167">
    <property type="entry name" value="NFE2-like"/>
</dbReference>
<dbReference type="InterPro" id="IPR008917">
    <property type="entry name" value="TF_DNA-bd_sf"/>
</dbReference>
<dbReference type="PANTHER" id="PTHR24411">
    <property type="entry name" value="NUCLEAR FACTOR ERYTHROID 2-RELATED FACTOR"/>
    <property type="match status" value="1"/>
</dbReference>
<dbReference type="PANTHER" id="PTHR24411:SF8">
    <property type="entry name" value="NUCLEAR FACTOR ERYTHROID 2-RELATED FACTOR 3"/>
    <property type="match status" value="1"/>
</dbReference>
<dbReference type="Pfam" id="PF03131">
    <property type="entry name" value="bZIP_Maf"/>
    <property type="match status" value="1"/>
</dbReference>
<dbReference type="SMART" id="SM00338">
    <property type="entry name" value="BRLZ"/>
    <property type="match status" value="1"/>
</dbReference>
<dbReference type="SUPFAM" id="SSF47454">
    <property type="entry name" value="A DNA-binding domain in eukaryotic transcription factors"/>
    <property type="match status" value="1"/>
</dbReference>
<dbReference type="SUPFAM" id="SSF57959">
    <property type="entry name" value="Leucine zipper domain"/>
    <property type="match status" value="1"/>
</dbReference>
<dbReference type="PROSITE" id="PS50217">
    <property type="entry name" value="BZIP"/>
    <property type="match status" value="1"/>
</dbReference>
<dbReference type="PROSITE" id="PS00036">
    <property type="entry name" value="BZIP_BASIC"/>
    <property type="match status" value="1"/>
</dbReference>
<keyword id="KW-0010">Activator</keyword>
<keyword id="KW-0238">DNA-binding</keyword>
<keyword id="KW-0539">Nucleus</keyword>
<keyword id="KW-1267">Proteomics identification</keyword>
<keyword id="KW-1185">Reference proteome</keyword>
<keyword id="KW-0804">Transcription</keyword>
<keyword id="KW-0805">Transcription regulation</keyword>